<organism>
    <name type="scientific">Pelargonium hortorum</name>
    <name type="common">Common geranium</name>
    <name type="synonym">Pelargonium inquinans x Pelargonium zonale</name>
    <dbReference type="NCBI Taxonomy" id="4031"/>
    <lineage>
        <taxon>Eukaryota</taxon>
        <taxon>Viridiplantae</taxon>
        <taxon>Streptophyta</taxon>
        <taxon>Embryophyta</taxon>
        <taxon>Tracheophyta</taxon>
        <taxon>Spermatophyta</taxon>
        <taxon>Magnoliopsida</taxon>
        <taxon>eudicotyledons</taxon>
        <taxon>Gunneridae</taxon>
        <taxon>Pentapetalae</taxon>
        <taxon>rosids</taxon>
        <taxon>malvids</taxon>
        <taxon>Geraniales</taxon>
        <taxon>Geraniaceae</taxon>
        <taxon>Pelargonium</taxon>
    </lineage>
</organism>
<feature type="chain" id="PRO_0000360963" description="NAD(P)H-quinone oxidoreductase subunit 5, chloroplastic">
    <location>
        <begin position="1"/>
        <end position="744"/>
    </location>
</feature>
<feature type="transmembrane region" description="Helical" evidence="2">
    <location>
        <begin position="9"/>
        <end position="29"/>
    </location>
</feature>
<feature type="transmembrane region" description="Helical" evidence="2">
    <location>
        <begin position="41"/>
        <end position="61"/>
    </location>
</feature>
<feature type="transmembrane region" description="Helical" evidence="2">
    <location>
        <begin position="89"/>
        <end position="109"/>
    </location>
</feature>
<feature type="transmembrane region" description="Helical" evidence="2">
    <location>
        <begin position="125"/>
        <end position="145"/>
    </location>
</feature>
<feature type="transmembrane region" description="Helical" evidence="2">
    <location>
        <begin position="147"/>
        <end position="167"/>
    </location>
</feature>
<feature type="transmembrane region" description="Helical" evidence="2">
    <location>
        <begin position="185"/>
        <end position="205"/>
    </location>
</feature>
<feature type="transmembrane region" description="Helical" evidence="2">
    <location>
        <begin position="219"/>
        <end position="239"/>
    </location>
</feature>
<feature type="transmembrane region" description="Helical" evidence="2">
    <location>
        <begin position="258"/>
        <end position="278"/>
    </location>
</feature>
<feature type="transmembrane region" description="Helical" evidence="2">
    <location>
        <begin position="280"/>
        <end position="300"/>
    </location>
</feature>
<feature type="transmembrane region" description="Helical" evidence="2">
    <location>
        <begin position="327"/>
        <end position="347"/>
    </location>
</feature>
<feature type="transmembrane region" description="Helical" evidence="2">
    <location>
        <begin position="354"/>
        <end position="374"/>
    </location>
</feature>
<feature type="transmembrane region" description="Helical" evidence="2">
    <location>
        <begin position="396"/>
        <end position="416"/>
    </location>
</feature>
<feature type="transmembrane region" description="Helical" evidence="2">
    <location>
        <begin position="425"/>
        <end position="445"/>
    </location>
</feature>
<feature type="transmembrane region" description="Helical" evidence="2">
    <location>
        <begin position="546"/>
        <end position="566"/>
    </location>
</feature>
<feature type="transmembrane region" description="Helical" evidence="2">
    <location>
        <begin position="600"/>
        <end position="620"/>
    </location>
</feature>
<feature type="transmembrane region" description="Helical" evidence="2">
    <location>
        <begin position="722"/>
        <end position="742"/>
    </location>
</feature>
<evidence type="ECO:0000250" key="1"/>
<evidence type="ECO:0000255" key="2"/>
<evidence type="ECO:0000305" key="3"/>
<reference key="1">
    <citation type="journal article" date="2006" name="Mol. Biol. Evol.">
        <title>The complete chloroplast genome sequence of Pelargonium x hortorum: organization and evolution of the largest and most highly rearranged chloroplast genome of land plants.</title>
        <authorList>
            <person name="Chumley T.W."/>
            <person name="Palmer J.D."/>
            <person name="Mower J.P."/>
            <person name="Fourcade H.M."/>
            <person name="Calie P.J."/>
            <person name="Boore J.L."/>
            <person name="Jansen R.K."/>
        </authorList>
    </citation>
    <scope>NUCLEOTIDE SEQUENCE [LARGE SCALE GENOMIC DNA]</scope>
    <source>
        <strain>cv. Ringo White</strain>
    </source>
</reference>
<sequence>MEHIYQYSWIMPFIPLPVPMLIGVGLLLFPTTTKHLRRIWAFPTLFLLGLVMLLSAYFFILQLNKSYIYQYVWSWTINNDFSLEFGHLVDPLTSIMSILITTVGITVLIYSEKYMFHDQGYLRFFSYMTLFHVSMLGLVTSSNLIQIYICWEFVGMFSYLLIGFWFTRPVAANACQKAFVTNRVGDFSFLLGILGLYWITGSFEFRDLFEIFYNLVHNNEIPFFFLTLCAFLLFGGALAKSAQFPLHVWLPDAMEGPTPISALIHAATMVAAGIFLVARLLPLFIVMPYILNLISFIGIITVFLGATLALSQKDIKRGLAYSTMSQLGYMMLALGMGSYRAALFHLITHAYSKALLFLGAGSIIHSMEAFVGYSPEKSQNMVLMGGLIKHMPITKTSFLLGTLSLCGIPPLACFWSKDSILNDSWLYSPIFAIIACSTTGFTAFYMFRIYLLTFEGHLNVHFRNYSGKRSNSFYSISLWGNEGPKTLQKKKGFKTLLTMNNKKGVTFFCKKIDRIDSSVRNMTRLFTHFEAKNTLPYPHESDNTMLFPMVLLVLFTLFVGAIGIPFNQEDKNLDILSKFLTPSINLLHEKSNNSVDWYEFIPNATLSVSLSYFGIVIASVLYKPNYLSLTKLNLLNLFVKGGPNKIFGDRIRNRIYDWSYNRGYIDTFYAISLARGLRGFAEFTHFFDARVIDGITNGMGILSFFLGEGIKCVGGGRLSSYLLLYFDCVLLFLFISSFLYLFHF</sequence>
<comment type="function">
    <text evidence="1">NDH shuttles electrons from NAD(P)H:plastoquinone, via FMN and iron-sulfur (Fe-S) centers, to quinones in the photosynthetic chain and possibly in a chloroplast respiratory chain. The immediate electron acceptor for the enzyme in this species is believed to be plastoquinone. Couples the redox reaction to proton translocation, and thus conserves the redox energy in a proton gradient (By similarity).</text>
</comment>
<comment type="catalytic activity">
    <reaction>
        <text>a plastoquinone + NADH + (n+1) H(+)(in) = a plastoquinol + NAD(+) + n H(+)(out)</text>
        <dbReference type="Rhea" id="RHEA:42608"/>
        <dbReference type="Rhea" id="RHEA-COMP:9561"/>
        <dbReference type="Rhea" id="RHEA-COMP:9562"/>
        <dbReference type="ChEBI" id="CHEBI:15378"/>
        <dbReference type="ChEBI" id="CHEBI:17757"/>
        <dbReference type="ChEBI" id="CHEBI:57540"/>
        <dbReference type="ChEBI" id="CHEBI:57945"/>
        <dbReference type="ChEBI" id="CHEBI:62192"/>
    </reaction>
</comment>
<comment type="catalytic activity">
    <reaction>
        <text>a plastoquinone + NADPH + (n+1) H(+)(in) = a plastoquinol + NADP(+) + n H(+)(out)</text>
        <dbReference type="Rhea" id="RHEA:42612"/>
        <dbReference type="Rhea" id="RHEA-COMP:9561"/>
        <dbReference type="Rhea" id="RHEA-COMP:9562"/>
        <dbReference type="ChEBI" id="CHEBI:15378"/>
        <dbReference type="ChEBI" id="CHEBI:17757"/>
        <dbReference type="ChEBI" id="CHEBI:57783"/>
        <dbReference type="ChEBI" id="CHEBI:58349"/>
        <dbReference type="ChEBI" id="CHEBI:62192"/>
    </reaction>
</comment>
<comment type="subunit">
    <text evidence="1">NDH is composed of at least 16 different subunits, 5 of which are encoded in the nucleus.</text>
</comment>
<comment type="subcellular location">
    <subcellularLocation>
        <location evidence="1">Plastid</location>
        <location evidence="1">Chloroplast thylakoid membrane</location>
        <topology evidence="1">Multi-pass membrane protein</topology>
    </subcellularLocation>
</comment>
<comment type="similarity">
    <text evidence="3">Belongs to the complex I subunit 5 family.</text>
</comment>
<geneLocation type="chloroplast"/>
<accession>Q06FL7</accession>
<dbReference type="EC" id="7.1.1.-"/>
<dbReference type="EMBL" id="DQ897681">
    <property type="protein sequence ID" value="ABI17283.1"/>
    <property type="molecule type" value="Genomic_DNA"/>
</dbReference>
<dbReference type="EMBL" id="DQ897681">
    <property type="protein sequence ID" value="ABI17355.1"/>
    <property type="molecule type" value="Genomic_DNA"/>
</dbReference>
<dbReference type="RefSeq" id="YP_784092.1">
    <property type="nucleotide sequence ID" value="NC_008454.1"/>
</dbReference>
<dbReference type="RefSeq" id="YP_784164.1">
    <property type="nucleotide sequence ID" value="NC_008454.1"/>
</dbReference>
<dbReference type="SMR" id="Q06FL7"/>
<dbReference type="GeneID" id="4362820"/>
<dbReference type="GeneID" id="4362932"/>
<dbReference type="GO" id="GO:0009535">
    <property type="term" value="C:chloroplast thylakoid membrane"/>
    <property type="evidence" value="ECO:0007669"/>
    <property type="project" value="UniProtKB-SubCell"/>
</dbReference>
<dbReference type="GO" id="GO:0008137">
    <property type="term" value="F:NADH dehydrogenase (ubiquinone) activity"/>
    <property type="evidence" value="ECO:0007669"/>
    <property type="project" value="InterPro"/>
</dbReference>
<dbReference type="GO" id="GO:0048038">
    <property type="term" value="F:quinone binding"/>
    <property type="evidence" value="ECO:0007669"/>
    <property type="project" value="UniProtKB-KW"/>
</dbReference>
<dbReference type="GO" id="GO:0042773">
    <property type="term" value="P:ATP synthesis coupled electron transport"/>
    <property type="evidence" value="ECO:0007669"/>
    <property type="project" value="InterPro"/>
</dbReference>
<dbReference type="GO" id="GO:0015990">
    <property type="term" value="P:electron transport coupled proton transport"/>
    <property type="evidence" value="ECO:0007669"/>
    <property type="project" value="TreeGrafter"/>
</dbReference>
<dbReference type="Gene3D" id="1.20.5.2700">
    <property type="match status" value="1"/>
</dbReference>
<dbReference type="InterPro" id="IPR002128">
    <property type="entry name" value="NADH_UbQ_OxRdtase_chlpt_su5_C"/>
</dbReference>
<dbReference type="InterPro" id="IPR018393">
    <property type="entry name" value="NADHpl_OxRdtase_5_subgr"/>
</dbReference>
<dbReference type="InterPro" id="IPR001750">
    <property type="entry name" value="ND/Mrp_TM"/>
</dbReference>
<dbReference type="InterPro" id="IPR003945">
    <property type="entry name" value="NU5C-like"/>
</dbReference>
<dbReference type="InterPro" id="IPR001516">
    <property type="entry name" value="Proton_antipo_N"/>
</dbReference>
<dbReference type="NCBIfam" id="TIGR01974">
    <property type="entry name" value="NDH_I_L"/>
    <property type="match status" value="1"/>
</dbReference>
<dbReference type="NCBIfam" id="NF005141">
    <property type="entry name" value="PRK06590.1"/>
    <property type="match status" value="1"/>
</dbReference>
<dbReference type="PANTHER" id="PTHR42829">
    <property type="entry name" value="NADH-UBIQUINONE OXIDOREDUCTASE CHAIN 5"/>
    <property type="match status" value="1"/>
</dbReference>
<dbReference type="PANTHER" id="PTHR42829:SF2">
    <property type="entry name" value="NADH-UBIQUINONE OXIDOREDUCTASE CHAIN 5"/>
    <property type="match status" value="1"/>
</dbReference>
<dbReference type="Pfam" id="PF01010">
    <property type="entry name" value="Proton_antipo_C"/>
    <property type="match status" value="1"/>
</dbReference>
<dbReference type="Pfam" id="PF00361">
    <property type="entry name" value="Proton_antipo_M"/>
    <property type="match status" value="1"/>
</dbReference>
<dbReference type="Pfam" id="PF00662">
    <property type="entry name" value="Proton_antipo_N"/>
    <property type="match status" value="1"/>
</dbReference>
<dbReference type="PRINTS" id="PR01434">
    <property type="entry name" value="NADHDHGNASE5"/>
</dbReference>
<dbReference type="PRINTS" id="PR01435">
    <property type="entry name" value="NPOXDRDTASE5"/>
</dbReference>
<proteinExistence type="inferred from homology"/>
<name>NU5C_PELHO</name>
<protein>
    <recommendedName>
        <fullName>NAD(P)H-quinone oxidoreductase subunit 5, chloroplastic</fullName>
        <ecNumber>7.1.1.-</ecNumber>
    </recommendedName>
    <alternativeName>
        <fullName>NAD(P)H dehydrogenase subunit 5</fullName>
    </alternativeName>
    <alternativeName>
        <fullName>NADH-plastoquinone oxidoreductase subunit 5</fullName>
    </alternativeName>
</protein>
<gene>
    <name type="primary">ndhF</name>
</gene>
<keyword id="KW-0150">Chloroplast</keyword>
<keyword id="KW-0472">Membrane</keyword>
<keyword id="KW-0520">NAD</keyword>
<keyword id="KW-0521">NADP</keyword>
<keyword id="KW-0934">Plastid</keyword>
<keyword id="KW-0618">Plastoquinone</keyword>
<keyword id="KW-0874">Quinone</keyword>
<keyword id="KW-0793">Thylakoid</keyword>
<keyword id="KW-1278">Translocase</keyword>
<keyword id="KW-0812">Transmembrane</keyword>
<keyword id="KW-1133">Transmembrane helix</keyword>
<keyword id="KW-0813">Transport</keyword>